<comment type="function">
    <text evidence="1">Involved in the de novo purine biosynthesis. Catalyzes the transfer of formate to 5-phospho-ribosyl-glycinamide (GAR), producing 5-phospho-ribosyl-N-formylglycinamide (FGAR). Formate is provided by PurU via hydrolysis of 10-formyl-tetrahydrofolate.</text>
</comment>
<comment type="catalytic activity">
    <reaction evidence="1">
        <text>N(1)-(5-phospho-beta-D-ribosyl)glycinamide + formate + ATP = N(2)-formyl-N(1)-(5-phospho-beta-D-ribosyl)glycinamide + ADP + phosphate + H(+)</text>
        <dbReference type="Rhea" id="RHEA:24829"/>
        <dbReference type="ChEBI" id="CHEBI:15378"/>
        <dbReference type="ChEBI" id="CHEBI:15740"/>
        <dbReference type="ChEBI" id="CHEBI:30616"/>
        <dbReference type="ChEBI" id="CHEBI:43474"/>
        <dbReference type="ChEBI" id="CHEBI:143788"/>
        <dbReference type="ChEBI" id="CHEBI:147286"/>
        <dbReference type="ChEBI" id="CHEBI:456216"/>
        <dbReference type="EC" id="6.3.1.21"/>
    </reaction>
    <physiologicalReaction direction="left-to-right" evidence="1">
        <dbReference type="Rhea" id="RHEA:24830"/>
    </physiologicalReaction>
</comment>
<comment type="pathway">
    <text evidence="1">Purine metabolism; IMP biosynthesis via de novo pathway; N(2)-formyl-N(1)-(5-phospho-D-ribosyl)glycinamide from N(1)-(5-phospho-D-ribosyl)glycinamide (formate route): step 1/1.</text>
</comment>
<comment type="subunit">
    <text evidence="1">Homodimer.</text>
</comment>
<comment type="similarity">
    <text evidence="1">Belongs to the PurK/PurT family.</text>
</comment>
<organism>
    <name type="scientific">Leptothrix cholodnii (strain ATCC 51168 / LMG 8142 / SP-6)</name>
    <name type="common">Leptothrix discophora (strain SP-6)</name>
    <dbReference type="NCBI Taxonomy" id="395495"/>
    <lineage>
        <taxon>Bacteria</taxon>
        <taxon>Pseudomonadati</taxon>
        <taxon>Pseudomonadota</taxon>
        <taxon>Betaproteobacteria</taxon>
        <taxon>Burkholderiales</taxon>
        <taxon>Sphaerotilaceae</taxon>
        <taxon>Leptothrix</taxon>
    </lineage>
</organism>
<proteinExistence type="inferred from homology"/>
<accession>B1Y650</accession>
<sequence length="405" mass="43422">MKPLGTPLSPDATRVMLLGSGELGKEVLIALQRLGVETIAVDRYDNAPGQQVAHQSHTIAMSDPAALRTLIEAERPDLVVPEIEAIATQTLEALEAEGVVRVIPTARATRLTMDREGIRRLAAETLGLPTSPYRFCDSLAELQAAIDGADGQPAIGYPCIVKPVMSSSGKGQSKIDGPADVQAAWDYAMVGGRVSNGRVIVEGFIDFDYEITQLTVRALGADGQVETHFCDPIGHVQVRGDYVESWQPHPMQPAALALSRHIARTVTDNLGGQGLFGVELFVKGDLVWFSEVSPRPHDTGMVTMITQWQNEFELHARAILGLPVSTALKSPGASAVIYGGVDAPGVVYDGVDEALRVPNSEIRLFGKPESFERRRMGVALVHDADVDVARTQAKLAAGKVKARPA</sequence>
<dbReference type="EC" id="6.3.1.21" evidence="1"/>
<dbReference type="EMBL" id="CP001013">
    <property type="protein sequence ID" value="ACB32397.1"/>
    <property type="molecule type" value="Genomic_DNA"/>
</dbReference>
<dbReference type="RefSeq" id="WP_012345159.1">
    <property type="nucleotide sequence ID" value="NC_010524.1"/>
</dbReference>
<dbReference type="SMR" id="B1Y650"/>
<dbReference type="STRING" id="395495.Lcho_0122"/>
<dbReference type="KEGG" id="lch:Lcho_0122"/>
<dbReference type="eggNOG" id="COG0027">
    <property type="taxonomic scope" value="Bacteria"/>
</dbReference>
<dbReference type="HOGENOM" id="CLU_011534_1_3_4"/>
<dbReference type="OrthoDB" id="9804625at2"/>
<dbReference type="UniPathway" id="UPA00074">
    <property type="reaction ID" value="UER00127"/>
</dbReference>
<dbReference type="Proteomes" id="UP000001693">
    <property type="component" value="Chromosome"/>
</dbReference>
<dbReference type="GO" id="GO:0005829">
    <property type="term" value="C:cytosol"/>
    <property type="evidence" value="ECO:0007669"/>
    <property type="project" value="TreeGrafter"/>
</dbReference>
<dbReference type="GO" id="GO:0005524">
    <property type="term" value="F:ATP binding"/>
    <property type="evidence" value="ECO:0007669"/>
    <property type="project" value="UniProtKB-UniRule"/>
</dbReference>
<dbReference type="GO" id="GO:0000287">
    <property type="term" value="F:magnesium ion binding"/>
    <property type="evidence" value="ECO:0007669"/>
    <property type="project" value="InterPro"/>
</dbReference>
<dbReference type="GO" id="GO:0043815">
    <property type="term" value="F:phosphoribosylglycinamide formyltransferase 2 activity"/>
    <property type="evidence" value="ECO:0007669"/>
    <property type="project" value="UniProtKB-UniRule"/>
</dbReference>
<dbReference type="GO" id="GO:0004644">
    <property type="term" value="F:phosphoribosylglycinamide formyltransferase activity"/>
    <property type="evidence" value="ECO:0007669"/>
    <property type="project" value="InterPro"/>
</dbReference>
<dbReference type="GO" id="GO:0006189">
    <property type="term" value="P:'de novo' IMP biosynthetic process"/>
    <property type="evidence" value="ECO:0007669"/>
    <property type="project" value="UniProtKB-UniRule"/>
</dbReference>
<dbReference type="Gene3D" id="3.40.50.20">
    <property type="match status" value="1"/>
</dbReference>
<dbReference type="Gene3D" id="3.30.1490.20">
    <property type="entry name" value="ATP-grasp fold, A domain"/>
    <property type="match status" value="1"/>
</dbReference>
<dbReference type="Gene3D" id="3.30.470.20">
    <property type="entry name" value="ATP-grasp fold, B domain"/>
    <property type="match status" value="1"/>
</dbReference>
<dbReference type="HAMAP" id="MF_01643">
    <property type="entry name" value="PurT"/>
    <property type="match status" value="1"/>
</dbReference>
<dbReference type="InterPro" id="IPR011761">
    <property type="entry name" value="ATP-grasp"/>
</dbReference>
<dbReference type="InterPro" id="IPR003135">
    <property type="entry name" value="ATP-grasp_carboxylate-amine"/>
</dbReference>
<dbReference type="InterPro" id="IPR013815">
    <property type="entry name" value="ATP_grasp_subdomain_1"/>
</dbReference>
<dbReference type="InterPro" id="IPR016185">
    <property type="entry name" value="PreATP-grasp_dom_sf"/>
</dbReference>
<dbReference type="InterPro" id="IPR005862">
    <property type="entry name" value="PurT"/>
</dbReference>
<dbReference type="InterPro" id="IPR054350">
    <property type="entry name" value="PurT/PurK_preATP-grasp"/>
</dbReference>
<dbReference type="InterPro" id="IPR048740">
    <property type="entry name" value="PurT_C"/>
</dbReference>
<dbReference type="InterPro" id="IPR011054">
    <property type="entry name" value="Rudment_hybrid_motif"/>
</dbReference>
<dbReference type="NCBIfam" id="NF006766">
    <property type="entry name" value="PRK09288.1"/>
    <property type="match status" value="1"/>
</dbReference>
<dbReference type="NCBIfam" id="TIGR01142">
    <property type="entry name" value="purT"/>
    <property type="match status" value="1"/>
</dbReference>
<dbReference type="PANTHER" id="PTHR43055">
    <property type="entry name" value="FORMATE-DEPENDENT PHOSPHORIBOSYLGLYCINAMIDE FORMYLTRANSFERASE"/>
    <property type="match status" value="1"/>
</dbReference>
<dbReference type="PANTHER" id="PTHR43055:SF1">
    <property type="entry name" value="FORMATE-DEPENDENT PHOSPHORIBOSYLGLYCINAMIDE FORMYLTRANSFERASE"/>
    <property type="match status" value="1"/>
</dbReference>
<dbReference type="Pfam" id="PF02222">
    <property type="entry name" value="ATP-grasp"/>
    <property type="match status" value="1"/>
</dbReference>
<dbReference type="Pfam" id="PF21244">
    <property type="entry name" value="PurT_C"/>
    <property type="match status" value="1"/>
</dbReference>
<dbReference type="Pfam" id="PF22660">
    <property type="entry name" value="RS_preATP-grasp-like"/>
    <property type="match status" value="1"/>
</dbReference>
<dbReference type="SUPFAM" id="SSF56059">
    <property type="entry name" value="Glutathione synthetase ATP-binding domain-like"/>
    <property type="match status" value="1"/>
</dbReference>
<dbReference type="SUPFAM" id="SSF52440">
    <property type="entry name" value="PreATP-grasp domain"/>
    <property type="match status" value="1"/>
</dbReference>
<dbReference type="SUPFAM" id="SSF51246">
    <property type="entry name" value="Rudiment single hybrid motif"/>
    <property type="match status" value="1"/>
</dbReference>
<dbReference type="PROSITE" id="PS50975">
    <property type="entry name" value="ATP_GRASP"/>
    <property type="match status" value="1"/>
</dbReference>
<protein>
    <recommendedName>
        <fullName evidence="1">Formate-dependent phosphoribosylglycinamide formyltransferase</fullName>
        <ecNumber evidence="1">6.3.1.21</ecNumber>
    </recommendedName>
    <alternativeName>
        <fullName evidence="1">5'-phosphoribosylglycinamide transformylase 2</fullName>
    </alternativeName>
    <alternativeName>
        <fullName evidence="1">Formate-dependent GAR transformylase</fullName>
    </alternativeName>
    <alternativeName>
        <fullName evidence="1">GAR transformylase 2</fullName>
        <shortName evidence="1">GART 2</shortName>
    </alternativeName>
    <alternativeName>
        <fullName evidence="1">Non-folate glycinamide ribonucleotide transformylase</fullName>
    </alternativeName>
    <alternativeName>
        <fullName evidence="1">Phosphoribosylglycinamide formyltransferase 2</fullName>
    </alternativeName>
</protein>
<name>PURT_LEPCP</name>
<feature type="chain" id="PRO_1000186883" description="Formate-dependent phosphoribosylglycinamide formyltransferase">
    <location>
        <begin position="1"/>
        <end position="405"/>
    </location>
</feature>
<feature type="domain" description="ATP-grasp" evidence="1">
    <location>
        <begin position="120"/>
        <end position="320"/>
    </location>
</feature>
<feature type="binding site" evidence="1">
    <location>
        <begin position="22"/>
        <end position="23"/>
    </location>
    <ligand>
        <name>N(1)-(5-phospho-beta-D-ribosyl)glycinamide</name>
        <dbReference type="ChEBI" id="CHEBI:143788"/>
    </ligand>
</feature>
<feature type="binding site" evidence="1">
    <location>
        <position position="82"/>
    </location>
    <ligand>
        <name>N(1)-(5-phospho-beta-D-ribosyl)glycinamide</name>
        <dbReference type="ChEBI" id="CHEBI:143788"/>
    </ligand>
</feature>
<feature type="binding site" evidence="1">
    <location>
        <position position="115"/>
    </location>
    <ligand>
        <name>ATP</name>
        <dbReference type="ChEBI" id="CHEBI:30616"/>
    </ligand>
</feature>
<feature type="binding site" evidence="1">
    <location>
        <position position="162"/>
    </location>
    <ligand>
        <name>ATP</name>
        <dbReference type="ChEBI" id="CHEBI:30616"/>
    </ligand>
</feature>
<feature type="binding site" evidence="1">
    <location>
        <begin position="167"/>
        <end position="172"/>
    </location>
    <ligand>
        <name>ATP</name>
        <dbReference type="ChEBI" id="CHEBI:30616"/>
    </ligand>
</feature>
<feature type="binding site" evidence="1">
    <location>
        <begin position="202"/>
        <end position="205"/>
    </location>
    <ligand>
        <name>ATP</name>
        <dbReference type="ChEBI" id="CHEBI:30616"/>
    </ligand>
</feature>
<feature type="binding site" evidence="1">
    <location>
        <position position="210"/>
    </location>
    <ligand>
        <name>ATP</name>
        <dbReference type="ChEBI" id="CHEBI:30616"/>
    </ligand>
</feature>
<feature type="binding site" evidence="1">
    <location>
        <position position="279"/>
    </location>
    <ligand>
        <name>Mg(2+)</name>
        <dbReference type="ChEBI" id="CHEBI:18420"/>
    </ligand>
</feature>
<feature type="binding site" evidence="1">
    <location>
        <position position="291"/>
    </location>
    <ligand>
        <name>Mg(2+)</name>
        <dbReference type="ChEBI" id="CHEBI:18420"/>
    </ligand>
</feature>
<feature type="binding site" evidence="1">
    <location>
        <position position="298"/>
    </location>
    <ligand>
        <name>N(1)-(5-phospho-beta-D-ribosyl)glycinamide</name>
        <dbReference type="ChEBI" id="CHEBI:143788"/>
    </ligand>
</feature>
<feature type="binding site" evidence="1">
    <location>
        <position position="367"/>
    </location>
    <ligand>
        <name>N(1)-(5-phospho-beta-D-ribosyl)glycinamide</name>
        <dbReference type="ChEBI" id="CHEBI:143788"/>
    </ligand>
</feature>
<feature type="binding site" evidence="1">
    <location>
        <begin position="374"/>
        <end position="375"/>
    </location>
    <ligand>
        <name>N(1)-(5-phospho-beta-D-ribosyl)glycinamide</name>
        <dbReference type="ChEBI" id="CHEBI:143788"/>
    </ligand>
</feature>
<keyword id="KW-0067">ATP-binding</keyword>
<keyword id="KW-0436">Ligase</keyword>
<keyword id="KW-0460">Magnesium</keyword>
<keyword id="KW-0479">Metal-binding</keyword>
<keyword id="KW-0547">Nucleotide-binding</keyword>
<keyword id="KW-0658">Purine biosynthesis</keyword>
<keyword id="KW-1185">Reference proteome</keyword>
<reference key="1">
    <citation type="submission" date="2008-03" db="EMBL/GenBank/DDBJ databases">
        <title>Complete sequence of Leptothrix cholodnii SP-6.</title>
        <authorList>
            <consortium name="US DOE Joint Genome Institute"/>
            <person name="Copeland A."/>
            <person name="Lucas S."/>
            <person name="Lapidus A."/>
            <person name="Glavina del Rio T."/>
            <person name="Dalin E."/>
            <person name="Tice H."/>
            <person name="Bruce D."/>
            <person name="Goodwin L."/>
            <person name="Pitluck S."/>
            <person name="Chertkov O."/>
            <person name="Brettin T."/>
            <person name="Detter J.C."/>
            <person name="Han C."/>
            <person name="Kuske C.R."/>
            <person name="Schmutz J."/>
            <person name="Larimer F."/>
            <person name="Land M."/>
            <person name="Hauser L."/>
            <person name="Kyrpides N."/>
            <person name="Lykidis A."/>
            <person name="Emerson D."/>
            <person name="Richardson P."/>
        </authorList>
    </citation>
    <scope>NUCLEOTIDE SEQUENCE [LARGE SCALE GENOMIC DNA]</scope>
    <source>
        <strain>ATCC 51168 / LMG 8142 / SP-6</strain>
    </source>
</reference>
<evidence type="ECO:0000255" key="1">
    <source>
        <dbReference type="HAMAP-Rule" id="MF_01643"/>
    </source>
</evidence>
<gene>
    <name evidence="1" type="primary">purT</name>
    <name type="ordered locus">Lcho_0122</name>
</gene>